<feature type="chain" id="PRO_0000229688" description="NAD kinase">
    <location>
        <begin position="1"/>
        <end position="292"/>
    </location>
</feature>
<feature type="active site" description="Proton acceptor" evidence="1">
    <location>
        <position position="73"/>
    </location>
</feature>
<feature type="binding site" evidence="1">
    <location>
        <begin position="73"/>
        <end position="74"/>
    </location>
    <ligand>
        <name>NAD(+)</name>
        <dbReference type="ChEBI" id="CHEBI:57540"/>
    </ligand>
</feature>
<feature type="binding site" evidence="1">
    <location>
        <begin position="147"/>
        <end position="148"/>
    </location>
    <ligand>
        <name>NAD(+)</name>
        <dbReference type="ChEBI" id="CHEBI:57540"/>
    </ligand>
</feature>
<feature type="binding site" evidence="1">
    <location>
        <position position="158"/>
    </location>
    <ligand>
        <name>NAD(+)</name>
        <dbReference type="ChEBI" id="CHEBI:57540"/>
    </ligand>
</feature>
<feature type="binding site" evidence="1">
    <location>
        <position position="175"/>
    </location>
    <ligand>
        <name>NAD(+)</name>
        <dbReference type="ChEBI" id="CHEBI:57540"/>
    </ligand>
</feature>
<feature type="binding site" evidence="1">
    <location>
        <position position="177"/>
    </location>
    <ligand>
        <name>NAD(+)</name>
        <dbReference type="ChEBI" id="CHEBI:57540"/>
    </ligand>
</feature>
<feature type="binding site" evidence="1">
    <location>
        <begin position="188"/>
        <end position="193"/>
    </location>
    <ligand>
        <name>NAD(+)</name>
        <dbReference type="ChEBI" id="CHEBI:57540"/>
    </ligand>
</feature>
<feature type="binding site" evidence="1">
    <location>
        <position position="247"/>
    </location>
    <ligand>
        <name>NAD(+)</name>
        <dbReference type="ChEBI" id="CHEBI:57540"/>
    </ligand>
</feature>
<dbReference type="EC" id="2.7.1.23" evidence="1"/>
<dbReference type="EMBL" id="CP000034">
    <property type="protein sequence ID" value="ABB62831.1"/>
    <property type="molecule type" value="Genomic_DNA"/>
</dbReference>
<dbReference type="RefSeq" id="WP_001059174.1">
    <property type="nucleotide sequence ID" value="NC_007606.1"/>
</dbReference>
<dbReference type="RefSeq" id="YP_404322.1">
    <property type="nucleotide sequence ID" value="NC_007606.1"/>
</dbReference>
<dbReference type="SMR" id="Q32CX4"/>
<dbReference type="STRING" id="300267.SDY_2788"/>
<dbReference type="EnsemblBacteria" id="ABB62831">
    <property type="protein sequence ID" value="ABB62831"/>
    <property type="gene ID" value="SDY_2788"/>
</dbReference>
<dbReference type="KEGG" id="sdy:SDY_2788"/>
<dbReference type="PATRIC" id="fig|300267.13.peg.3360"/>
<dbReference type="HOGENOM" id="CLU_008831_0_1_6"/>
<dbReference type="Proteomes" id="UP000002716">
    <property type="component" value="Chromosome"/>
</dbReference>
<dbReference type="GO" id="GO:0005737">
    <property type="term" value="C:cytoplasm"/>
    <property type="evidence" value="ECO:0007669"/>
    <property type="project" value="UniProtKB-SubCell"/>
</dbReference>
<dbReference type="GO" id="GO:0005524">
    <property type="term" value="F:ATP binding"/>
    <property type="evidence" value="ECO:0007669"/>
    <property type="project" value="UniProtKB-KW"/>
</dbReference>
<dbReference type="GO" id="GO:0046872">
    <property type="term" value="F:metal ion binding"/>
    <property type="evidence" value="ECO:0007669"/>
    <property type="project" value="UniProtKB-UniRule"/>
</dbReference>
<dbReference type="GO" id="GO:0051287">
    <property type="term" value="F:NAD binding"/>
    <property type="evidence" value="ECO:0007669"/>
    <property type="project" value="UniProtKB-ARBA"/>
</dbReference>
<dbReference type="GO" id="GO:0003951">
    <property type="term" value="F:NAD+ kinase activity"/>
    <property type="evidence" value="ECO:0007669"/>
    <property type="project" value="UniProtKB-UniRule"/>
</dbReference>
<dbReference type="GO" id="GO:0019674">
    <property type="term" value="P:NAD metabolic process"/>
    <property type="evidence" value="ECO:0007669"/>
    <property type="project" value="InterPro"/>
</dbReference>
<dbReference type="GO" id="GO:0006741">
    <property type="term" value="P:NADP biosynthetic process"/>
    <property type="evidence" value="ECO:0007669"/>
    <property type="project" value="UniProtKB-UniRule"/>
</dbReference>
<dbReference type="FunFam" id="2.60.200.30:FF:000001">
    <property type="entry name" value="NAD kinase"/>
    <property type="match status" value="1"/>
</dbReference>
<dbReference type="FunFam" id="3.40.50.10330:FF:000004">
    <property type="entry name" value="NAD kinase"/>
    <property type="match status" value="1"/>
</dbReference>
<dbReference type="Gene3D" id="3.40.50.10330">
    <property type="entry name" value="Probable inorganic polyphosphate/atp-NAD kinase, domain 1"/>
    <property type="match status" value="1"/>
</dbReference>
<dbReference type="Gene3D" id="2.60.200.30">
    <property type="entry name" value="Probable inorganic polyphosphate/atp-NAD kinase, domain 2"/>
    <property type="match status" value="1"/>
</dbReference>
<dbReference type="HAMAP" id="MF_00361">
    <property type="entry name" value="NAD_kinase"/>
    <property type="match status" value="1"/>
</dbReference>
<dbReference type="InterPro" id="IPR017438">
    <property type="entry name" value="ATP-NAD_kinase_N"/>
</dbReference>
<dbReference type="InterPro" id="IPR017437">
    <property type="entry name" value="ATP-NAD_kinase_PpnK-typ_C"/>
</dbReference>
<dbReference type="InterPro" id="IPR016064">
    <property type="entry name" value="NAD/diacylglycerol_kinase_sf"/>
</dbReference>
<dbReference type="InterPro" id="IPR002504">
    <property type="entry name" value="NADK"/>
</dbReference>
<dbReference type="NCBIfam" id="NF002306">
    <property type="entry name" value="PRK01231.1"/>
    <property type="match status" value="1"/>
</dbReference>
<dbReference type="NCBIfam" id="NF002893">
    <property type="entry name" value="PRK03378.1"/>
    <property type="match status" value="1"/>
</dbReference>
<dbReference type="PANTHER" id="PTHR20275">
    <property type="entry name" value="NAD KINASE"/>
    <property type="match status" value="1"/>
</dbReference>
<dbReference type="PANTHER" id="PTHR20275:SF0">
    <property type="entry name" value="NAD KINASE"/>
    <property type="match status" value="1"/>
</dbReference>
<dbReference type="Pfam" id="PF01513">
    <property type="entry name" value="NAD_kinase"/>
    <property type="match status" value="1"/>
</dbReference>
<dbReference type="Pfam" id="PF20143">
    <property type="entry name" value="NAD_kinase_C"/>
    <property type="match status" value="1"/>
</dbReference>
<dbReference type="SUPFAM" id="SSF111331">
    <property type="entry name" value="NAD kinase/diacylglycerol kinase-like"/>
    <property type="match status" value="1"/>
</dbReference>
<protein>
    <recommendedName>
        <fullName evidence="1">NAD kinase</fullName>
        <ecNumber evidence="1">2.7.1.23</ecNumber>
    </recommendedName>
    <alternativeName>
        <fullName evidence="1">ATP-dependent NAD kinase</fullName>
    </alternativeName>
</protein>
<keyword id="KW-0067">ATP-binding</keyword>
<keyword id="KW-0963">Cytoplasm</keyword>
<keyword id="KW-0418">Kinase</keyword>
<keyword id="KW-0520">NAD</keyword>
<keyword id="KW-0521">NADP</keyword>
<keyword id="KW-0547">Nucleotide-binding</keyword>
<keyword id="KW-1185">Reference proteome</keyword>
<keyword id="KW-0808">Transferase</keyword>
<gene>
    <name evidence="1" type="primary">nadK</name>
    <name type="ordered locus">SDY_2788</name>
</gene>
<accession>Q32CX4</accession>
<reference key="1">
    <citation type="journal article" date="2005" name="Nucleic Acids Res.">
        <title>Genome dynamics and diversity of Shigella species, the etiologic agents of bacillary dysentery.</title>
        <authorList>
            <person name="Yang F."/>
            <person name="Yang J."/>
            <person name="Zhang X."/>
            <person name="Chen L."/>
            <person name="Jiang Y."/>
            <person name="Yan Y."/>
            <person name="Tang X."/>
            <person name="Wang J."/>
            <person name="Xiong Z."/>
            <person name="Dong J."/>
            <person name="Xue Y."/>
            <person name="Zhu Y."/>
            <person name="Xu X."/>
            <person name="Sun L."/>
            <person name="Chen S."/>
            <person name="Nie H."/>
            <person name="Peng J."/>
            <person name="Xu J."/>
            <person name="Wang Y."/>
            <person name="Yuan Z."/>
            <person name="Wen Y."/>
            <person name="Yao Z."/>
            <person name="Shen Y."/>
            <person name="Qiang B."/>
            <person name="Hou Y."/>
            <person name="Yu J."/>
            <person name="Jin Q."/>
        </authorList>
    </citation>
    <scope>NUCLEOTIDE SEQUENCE [LARGE SCALE GENOMIC DNA]</scope>
    <source>
        <strain>Sd197</strain>
    </source>
</reference>
<name>NADK_SHIDS</name>
<proteinExistence type="inferred from homology"/>
<sequence length="292" mass="32520">MNNHFKCIGIVGHPRHPTALTTHEMLYRWLCTKGYEVIVEQQIAHELQLKNVKTGTLAEIGQLADLAVVVGGDGNMLGAARTLARYDIKVIGINRGNLGFLTDLDPDNAQQQLADVLEGHYTSEKRFLLEAQVCQQDCQKRISTAINEVVLHPGKVAHMIEFEVYIDEIFAFSQRSDGLIISTPTGSTAYSLSAGGPILTPSLDAITLVPMFPHTLSARPLVINSSSTIRLRFSHRRNDLEISCDSQIALPIQEGEDVLIRRCDYHLNLIHPKDYSYLNTLSTKLGWSKKLF</sequence>
<comment type="function">
    <text evidence="1">Involved in the regulation of the intracellular balance of NAD and NADP, and is a key enzyme in the biosynthesis of NADP. Catalyzes specifically the phosphorylation on 2'-hydroxyl of the adenosine moiety of NAD to yield NADP.</text>
</comment>
<comment type="catalytic activity">
    <reaction evidence="1">
        <text>NAD(+) + ATP = ADP + NADP(+) + H(+)</text>
        <dbReference type="Rhea" id="RHEA:18629"/>
        <dbReference type="ChEBI" id="CHEBI:15378"/>
        <dbReference type="ChEBI" id="CHEBI:30616"/>
        <dbReference type="ChEBI" id="CHEBI:57540"/>
        <dbReference type="ChEBI" id="CHEBI:58349"/>
        <dbReference type="ChEBI" id="CHEBI:456216"/>
        <dbReference type="EC" id="2.7.1.23"/>
    </reaction>
</comment>
<comment type="cofactor">
    <cofactor evidence="1">
        <name>a divalent metal cation</name>
        <dbReference type="ChEBI" id="CHEBI:60240"/>
    </cofactor>
</comment>
<comment type="subcellular location">
    <subcellularLocation>
        <location evidence="1">Cytoplasm</location>
    </subcellularLocation>
</comment>
<comment type="similarity">
    <text evidence="1">Belongs to the NAD kinase family.</text>
</comment>
<organism>
    <name type="scientific">Shigella dysenteriae serotype 1 (strain Sd197)</name>
    <dbReference type="NCBI Taxonomy" id="300267"/>
    <lineage>
        <taxon>Bacteria</taxon>
        <taxon>Pseudomonadati</taxon>
        <taxon>Pseudomonadota</taxon>
        <taxon>Gammaproteobacteria</taxon>
        <taxon>Enterobacterales</taxon>
        <taxon>Enterobacteriaceae</taxon>
        <taxon>Shigella</taxon>
    </lineage>
</organism>
<evidence type="ECO:0000255" key="1">
    <source>
        <dbReference type="HAMAP-Rule" id="MF_00361"/>
    </source>
</evidence>